<comment type="function">
    <text evidence="1">Catalyzes the radical-mediated insertion of two sulfur atoms into the C-6 and C-8 positions of the octanoyl moiety bound to the lipoyl domains of lipoate-dependent enzymes, thereby converting the octanoylated domains into lipoylated derivatives.</text>
</comment>
<comment type="catalytic activity">
    <reaction evidence="1">
        <text>[[Fe-S] cluster scaffold protein carrying a second [4Fe-4S](2+) cluster] + N(6)-octanoyl-L-lysyl-[protein] + 2 oxidized [2Fe-2S]-[ferredoxin] + 2 S-adenosyl-L-methionine + 4 H(+) = [[Fe-S] cluster scaffold protein] + N(6)-[(R)-dihydrolipoyl]-L-lysyl-[protein] + 4 Fe(3+) + 2 hydrogen sulfide + 2 5'-deoxyadenosine + 2 L-methionine + 2 reduced [2Fe-2S]-[ferredoxin]</text>
        <dbReference type="Rhea" id="RHEA:16585"/>
        <dbReference type="Rhea" id="RHEA-COMP:9928"/>
        <dbReference type="Rhea" id="RHEA-COMP:10000"/>
        <dbReference type="Rhea" id="RHEA-COMP:10001"/>
        <dbReference type="Rhea" id="RHEA-COMP:10475"/>
        <dbReference type="Rhea" id="RHEA-COMP:14568"/>
        <dbReference type="Rhea" id="RHEA-COMP:14569"/>
        <dbReference type="ChEBI" id="CHEBI:15378"/>
        <dbReference type="ChEBI" id="CHEBI:17319"/>
        <dbReference type="ChEBI" id="CHEBI:29034"/>
        <dbReference type="ChEBI" id="CHEBI:29919"/>
        <dbReference type="ChEBI" id="CHEBI:33722"/>
        <dbReference type="ChEBI" id="CHEBI:33737"/>
        <dbReference type="ChEBI" id="CHEBI:33738"/>
        <dbReference type="ChEBI" id="CHEBI:57844"/>
        <dbReference type="ChEBI" id="CHEBI:59789"/>
        <dbReference type="ChEBI" id="CHEBI:78809"/>
        <dbReference type="ChEBI" id="CHEBI:83100"/>
        <dbReference type="EC" id="2.8.1.8"/>
    </reaction>
</comment>
<comment type="cofactor">
    <cofactor evidence="1">
        <name>[4Fe-4S] cluster</name>
        <dbReference type="ChEBI" id="CHEBI:49883"/>
    </cofactor>
    <text evidence="1">Binds 2 [4Fe-4S] clusters per subunit. One cluster is coordinated with 3 cysteines and an exchangeable S-adenosyl-L-methionine.</text>
</comment>
<comment type="pathway">
    <text evidence="1">Protein modification; protein lipoylation via endogenous pathway; protein N(6)-(lipoyl)lysine from octanoyl-[acyl-carrier-protein]: step 2/2.</text>
</comment>
<comment type="subcellular location">
    <subcellularLocation>
        <location evidence="1">Mitochondrion</location>
    </subcellularLocation>
</comment>
<comment type="similarity">
    <text evidence="1">Belongs to the radical SAM superfamily. Lipoyl synthase family.</text>
</comment>
<organism>
    <name type="scientific">Aspergillus clavatus (strain ATCC 1007 / CBS 513.65 / DSM 816 / NCTC 3887 / NRRL 1 / QM 1276 / 107)</name>
    <dbReference type="NCBI Taxonomy" id="344612"/>
    <lineage>
        <taxon>Eukaryota</taxon>
        <taxon>Fungi</taxon>
        <taxon>Dikarya</taxon>
        <taxon>Ascomycota</taxon>
        <taxon>Pezizomycotina</taxon>
        <taxon>Eurotiomycetes</taxon>
        <taxon>Eurotiomycetidae</taxon>
        <taxon>Eurotiales</taxon>
        <taxon>Aspergillaceae</taxon>
        <taxon>Aspergillus</taxon>
        <taxon>Aspergillus subgen. Fumigati</taxon>
    </lineage>
</organism>
<feature type="transit peptide" description="Mitochondrion" evidence="1">
    <location>
        <begin position="1"/>
        <end position="33"/>
    </location>
</feature>
<feature type="chain" id="PRO_0000398251" description="Lipoyl synthase, mitochondrial">
    <location>
        <begin position="34"/>
        <end position="415"/>
    </location>
</feature>
<feature type="domain" description="Radical SAM core" evidence="2">
    <location>
        <begin position="148"/>
        <end position="367"/>
    </location>
</feature>
<feature type="binding site" evidence="1">
    <location>
        <position position="132"/>
    </location>
    <ligand>
        <name>[4Fe-4S] cluster</name>
        <dbReference type="ChEBI" id="CHEBI:49883"/>
        <label>1</label>
    </ligand>
</feature>
<feature type="binding site" evidence="1">
    <location>
        <position position="137"/>
    </location>
    <ligand>
        <name>[4Fe-4S] cluster</name>
        <dbReference type="ChEBI" id="CHEBI:49883"/>
        <label>1</label>
    </ligand>
</feature>
<feature type="binding site" evidence="1">
    <location>
        <position position="143"/>
    </location>
    <ligand>
        <name>[4Fe-4S] cluster</name>
        <dbReference type="ChEBI" id="CHEBI:49883"/>
        <label>1</label>
    </ligand>
</feature>
<feature type="binding site" evidence="1">
    <location>
        <position position="163"/>
    </location>
    <ligand>
        <name>[4Fe-4S] cluster</name>
        <dbReference type="ChEBI" id="CHEBI:49883"/>
        <label>2</label>
        <note>4Fe-4S-S-AdoMet</note>
    </ligand>
</feature>
<feature type="binding site" evidence="1">
    <location>
        <position position="167"/>
    </location>
    <ligand>
        <name>[4Fe-4S] cluster</name>
        <dbReference type="ChEBI" id="CHEBI:49883"/>
        <label>2</label>
        <note>4Fe-4S-S-AdoMet</note>
    </ligand>
</feature>
<feature type="binding site" evidence="1">
    <location>
        <position position="170"/>
    </location>
    <ligand>
        <name>[4Fe-4S] cluster</name>
        <dbReference type="ChEBI" id="CHEBI:49883"/>
        <label>2</label>
        <note>4Fe-4S-S-AdoMet</note>
    </ligand>
</feature>
<feature type="binding site" evidence="1">
    <location>
        <position position="378"/>
    </location>
    <ligand>
        <name>[4Fe-4S] cluster</name>
        <dbReference type="ChEBI" id="CHEBI:49883"/>
        <label>1</label>
    </ligand>
</feature>
<evidence type="ECO:0000255" key="1">
    <source>
        <dbReference type="HAMAP-Rule" id="MF_03123"/>
    </source>
</evidence>
<evidence type="ECO:0000255" key="2">
    <source>
        <dbReference type="PROSITE-ProRule" id="PRU01266"/>
    </source>
</evidence>
<accession>A1CJC4</accession>
<proteinExistence type="inferred from homology"/>
<name>LIPA_ASPCL</name>
<sequence length="415" mass="45519">MAASTSHLRSLCSSTRSLSRSGVIVTPIACRGYATTDPSPSATTPTPVRRRTTFKDKLNAGPSFSDFVSNGNDNAPLDPSEAYALKTALVGPAGRKKEMTRLPSWLKTPIPDSKNYQRLKKDLRGLNLHTVCEEARCPNISDCWGGSDKSSATATIMLMGDTCTRGCRFCSVKTSRAPPPLDPHEPENTAEAISRWGLGYVVLTSVDRDDLVDGGARHFAETVIKIKQKAPSILVECLTGDYAGDLDMVKLVARSGLDVYAHNVETVEALTPQVRDRRANFQQSLRVLDAAKKAQPTLITKTSLMLGLGETDEQLWDALRQLRAVNVDVVTFGQYMRPTKRHMAVHEYVTPDRFELWRQRALEMGFLYCASGPLVRSSYKAGEAFIENVLKKRRAASGGAETIGERPVAVDEASR</sequence>
<gene>
    <name type="ORF">ACLA_034510</name>
</gene>
<keyword id="KW-0004">4Fe-4S</keyword>
<keyword id="KW-0408">Iron</keyword>
<keyword id="KW-0411">Iron-sulfur</keyword>
<keyword id="KW-0479">Metal-binding</keyword>
<keyword id="KW-0496">Mitochondrion</keyword>
<keyword id="KW-1185">Reference proteome</keyword>
<keyword id="KW-0949">S-adenosyl-L-methionine</keyword>
<keyword id="KW-0808">Transferase</keyword>
<keyword id="KW-0809">Transit peptide</keyword>
<reference key="1">
    <citation type="journal article" date="2008" name="PLoS Genet.">
        <title>Genomic islands in the pathogenic filamentous fungus Aspergillus fumigatus.</title>
        <authorList>
            <person name="Fedorova N.D."/>
            <person name="Khaldi N."/>
            <person name="Joardar V.S."/>
            <person name="Maiti R."/>
            <person name="Amedeo P."/>
            <person name="Anderson M.J."/>
            <person name="Crabtree J."/>
            <person name="Silva J.C."/>
            <person name="Badger J.H."/>
            <person name="Albarraq A."/>
            <person name="Angiuoli S."/>
            <person name="Bussey H."/>
            <person name="Bowyer P."/>
            <person name="Cotty P.J."/>
            <person name="Dyer P.S."/>
            <person name="Egan A."/>
            <person name="Galens K."/>
            <person name="Fraser-Liggett C.M."/>
            <person name="Haas B.J."/>
            <person name="Inman J.M."/>
            <person name="Kent R."/>
            <person name="Lemieux S."/>
            <person name="Malavazi I."/>
            <person name="Orvis J."/>
            <person name="Roemer T."/>
            <person name="Ronning C.M."/>
            <person name="Sundaram J.P."/>
            <person name="Sutton G."/>
            <person name="Turner G."/>
            <person name="Venter J.C."/>
            <person name="White O.R."/>
            <person name="Whitty B.R."/>
            <person name="Youngman P."/>
            <person name="Wolfe K.H."/>
            <person name="Goldman G.H."/>
            <person name="Wortman J.R."/>
            <person name="Jiang B."/>
            <person name="Denning D.W."/>
            <person name="Nierman W.C."/>
        </authorList>
    </citation>
    <scope>NUCLEOTIDE SEQUENCE [LARGE SCALE GENOMIC DNA]</scope>
    <source>
        <strain>ATCC 1007 / CBS 513.65 / DSM 816 / NCTC 3887 / NRRL 1 / QM 1276 / 107</strain>
    </source>
</reference>
<dbReference type="EC" id="2.8.1.8" evidence="1"/>
<dbReference type="EMBL" id="DS027056">
    <property type="protein sequence ID" value="EAW09248.1"/>
    <property type="molecule type" value="Genomic_DNA"/>
</dbReference>
<dbReference type="RefSeq" id="XP_001270674.1">
    <property type="nucleotide sequence ID" value="XM_001270673.1"/>
</dbReference>
<dbReference type="SMR" id="A1CJC4"/>
<dbReference type="STRING" id="344612.A1CJC4"/>
<dbReference type="EnsemblFungi" id="EAW09248">
    <property type="protein sequence ID" value="EAW09248"/>
    <property type="gene ID" value="ACLA_034510"/>
</dbReference>
<dbReference type="GeneID" id="4702900"/>
<dbReference type="KEGG" id="act:ACLA_034510"/>
<dbReference type="VEuPathDB" id="FungiDB:ACLA_034510"/>
<dbReference type="eggNOG" id="KOG2672">
    <property type="taxonomic scope" value="Eukaryota"/>
</dbReference>
<dbReference type="HOGENOM" id="CLU_033144_2_0_1"/>
<dbReference type="OMA" id="PYCDIDF"/>
<dbReference type="OrthoDB" id="3231at2759"/>
<dbReference type="UniPathway" id="UPA00538">
    <property type="reaction ID" value="UER00593"/>
</dbReference>
<dbReference type="Proteomes" id="UP000006701">
    <property type="component" value="Unassembled WGS sequence"/>
</dbReference>
<dbReference type="GO" id="GO:0005739">
    <property type="term" value="C:mitochondrion"/>
    <property type="evidence" value="ECO:0007669"/>
    <property type="project" value="UniProtKB-SubCell"/>
</dbReference>
<dbReference type="GO" id="GO:0051539">
    <property type="term" value="F:4 iron, 4 sulfur cluster binding"/>
    <property type="evidence" value="ECO:0007669"/>
    <property type="project" value="UniProtKB-UniRule"/>
</dbReference>
<dbReference type="GO" id="GO:0016992">
    <property type="term" value="F:lipoate synthase activity"/>
    <property type="evidence" value="ECO:0007669"/>
    <property type="project" value="UniProtKB-UniRule"/>
</dbReference>
<dbReference type="GO" id="GO:0046872">
    <property type="term" value="F:metal ion binding"/>
    <property type="evidence" value="ECO:0007669"/>
    <property type="project" value="UniProtKB-KW"/>
</dbReference>
<dbReference type="CDD" id="cd01335">
    <property type="entry name" value="Radical_SAM"/>
    <property type="match status" value="1"/>
</dbReference>
<dbReference type="FunFam" id="3.20.20.70:FF:000036">
    <property type="entry name" value="Lipoyl synthase, mitochondrial"/>
    <property type="match status" value="1"/>
</dbReference>
<dbReference type="Gene3D" id="3.20.20.70">
    <property type="entry name" value="Aldolase class I"/>
    <property type="match status" value="1"/>
</dbReference>
<dbReference type="HAMAP" id="MF_00206">
    <property type="entry name" value="Lipoyl_synth"/>
    <property type="match status" value="1"/>
</dbReference>
<dbReference type="InterPro" id="IPR013785">
    <property type="entry name" value="Aldolase_TIM"/>
</dbReference>
<dbReference type="InterPro" id="IPR006638">
    <property type="entry name" value="Elp3/MiaA/NifB-like_rSAM"/>
</dbReference>
<dbReference type="InterPro" id="IPR031691">
    <property type="entry name" value="LIAS_N"/>
</dbReference>
<dbReference type="InterPro" id="IPR003698">
    <property type="entry name" value="Lipoyl_synth"/>
</dbReference>
<dbReference type="InterPro" id="IPR007197">
    <property type="entry name" value="rSAM"/>
</dbReference>
<dbReference type="NCBIfam" id="TIGR00510">
    <property type="entry name" value="lipA"/>
    <property type="match status" value="1"/>
</dbReference>
<dbReference type="NCBIfam" id="NF004019">
    <property type="entry name" value="PRK05481.1"/>
    <property type="match status" value="1"/>
</dbReference>
<dbReference type="NCBIfam" id="NF009544">
    <property type="entry name" value="PRK12928.1"/>
    <property type="match status" value="1"/>
</dbReference>
<dbReference type="PANTHER" id="PTHR10949">
    <property type="entry name" value="LIPOYL SYNTHASE"/>
    <property type="match status" value="1"/>
</dbReference>
<dbReference type="PANTHER" id="PTHR10949:SF0">
    <property type="entry name" value="LIPOYL SYNTHASE, MITOCHONDRIAL"/>
    <property type="match status" value="1"/>
</dbReference>
<dbReference type="Pfam" id="PF16881">
    <property type="entry name" value="LIAS_N"/>
    <property type="match status" value="1"/>
</dbReference>
<dbReference type="Pfam" id="PF04055">
    <property type="entry name" value="Radical_SAM"/>
    <property type="match status" value="1"/>
</dbReference>
<dbReference type="SFLD" id="SFLDF00271">
    <property type="entry name" value="lipoyl_synthase"/>
    <property type="match status" value="1"/>
</dbReference>
<dbReference type="SFLD" id="SFLDS00029">
    <property type="entry name" value="Radical_SAM"/>
    <property type="match status" value="1"/>
</dbReference>
<dbReference type="SMART" id="SM00729">
    <property type="entry name" value="Elp3"/>
    <property type="match status" value="1"/>
</dbReference>
<dbReference type="SUPFAM" id="SSF102114">
    <property type="entry name" value="Radical SAM enzymes"/>
    <property type="match status" value="1"/>
</dbReference>
<dbReference type="PROSITE" id="PS51918">
    <property type="entry name" value="RADICAL_SAM"/>
    <property type="match status" value="1"/>
</dbReference>
<protein>
    <recommendedName>
        <fullName evidence="1">Lipoyl synthase, mitochondrial</fullName>
        <ecNumber evidence="1">2.8.1.8</ecNumber>
    </recommendedName>
    <alternativeName>
        <fullName evidence="1">Lipoate synthase</fullName>
        <shortName evidence="1">LS</shortName>
        <shortName evidence="1">Lip-syn</shortName>
    </alternativeName>
    <alternativeName>
        <fullName evidence="1">Lipoic acid synthase</fullName>
    </alternativeName>
</protein>